<organism>
    <name type="scientific">Dictyostelium discoideum</name>
    <name type="common">Social amoeba</name>
    <dbReference type="NCBI Taxonomy" id="44689"/>
    <lineage>
        <taxon>Eukaryota</taxon>
        <taxon>Amoebozoa</taxon>
        <taxon>Evosea</taxon>
        <taxon>Eumycetozoa</taxon>
        <taxon>Dictyostelia</taxon>
        <taxon>Dictyosteliales</taxon>
        <taxon>Dictyosteliaceae</taxon>
        <taxon>Dictyostelium</taxon>
    </lineage>
</organism>
<dbReference type="EMBL" id="AAFI02000011">
    <property type="protein sequence ID" value="EAL70645.1"/>
    <property type="molecule type" value="Genomic_DNA"/>
</dbReference>
<dbReference type="EMBL" id="AAFI02000009">
    <property type="protein sequence ID" value="EAL70799.1"/>
    <property type="molecule type" value="Genomic_DNA"/>
</dbReference>
<dbReference type="RefSeq" id="XP_644571.1">
    <property type="nucleotide sequence ID" value="XM_639479.1"/>
</dbReference>
<dbReference type="RefSeq" id="XP_644680.1">
    <property type="nucleotide sequence ID" value="XM_639588.1"/>
</dbReference>
<dbReference type="SMR" id="Q556Q0"/>
<dbReference type="FunCoup" id="Q556Q0">
    <property type="interactions" value="1345"/>
</dbReference>
<dbReference type="STRING" id="44689.Q556Q0"/>
<dbReference type="MEROPS" id="T01.A13"/>
<dbReference type="PaxDb" id="44689-DDB0232934"/>
<dbReference type="EnsemblProtists" id="EAL70645">
    <property type="protein sequence ID" value="EAL70645"/>
    <property type="gene ID" value="DDB_G0273909"/>
</dbReference>
<dbReference type="EnsemblProtists" id="EAL70799">
    <property type="protein sequence ID" value="EAL70799"/>
    <property type="gene ID" value="DDB_G0273163"/>
</dbReference>
<dbReference type="GeneID" id="8618774"/>
<dbReference type="GeneID" id="8619202"/>
<dbReference type="KEGG" id="ddi:DDB_G0273163"/>
<dbReference type="KEGG" id="ddi:DDB_G0273909"/>
<dbReference type="dictyBase" id="DDB_G0273163">
    <property type="gene designation" value="psmB4-1"/>
</dbReference>
<dbReference type="dictyBase" id="DDB_G0273909">
    <property type="gene designation" value="psmB4-2"/>
</dbReference>
<dbReference type="VEuPathDB" id="AmoebaDB:DDB_G0273909"/>
<dbReference type="eggNOG" id="KOG0185">
    <property type="taxonomic scope" value="Eukaryota"/>
</dbReference>
<dbReference type="HOGENOM" id="CLU_072435_2_0_1"/>
<dbReference type="InParanoid" id="Q556Q0"/>
<dbReference type="OMA" id="QPIMRRY"/>
<dbReference type="PhylomeDB" id="Q556Q0"/>
<dbReference type="Reactome" id="R-DDI-1236978">
    <property type="pathway name" value="Cross-presentation of soluble exogenous antigens (endosomes)"/>
</dbReference>
<dbReference type="Reactome" id="R-DDI-174084">
    <property type="pathway name" value="Autodegradation of Cdh1 by Cdh1:APC/C"/>
</dbReference>
<dbReference type="Reactome" id="R-DDI-174154">
    <property type="pathway name" value="APC/C:Cdc20 mediated degradation of Securin"/>
</dbReference>
<dbReference type="Reactome" id="R-DDI-174178">
    <property type="pathway name" value="APC/C:Cdh1 mediated degradation of Cdc20 and other APC/C:Cdh1 targeted proteins in late mitosis/early G1"/>
</dbReference>
<dbReference type="Reactome" id="R-DDI-2467813">
    <property type="pathway name" value="Separation of Sister Chromatids"/>
</dbReference>
<dbReference type="Reactome" id="R-DDI-349425">
    <property type="pathway name" value="Autodegradation of the E3 ubiquitin ligase COP1"/>
</dbReference>
<dbReference type="Reactome" id="R-DDI-382556">
    <property type="pathway name" value="ABC-family proteins mediated transport"/>
</dbReference>
<dbReference type="Reactome" id="R-DDI-450408">
    <property type="pathway name" value="AUF1 (hnRNP D0) binds and destabilizes mRNA"/>
</dbReference>
<dbReference type="Reactome" id="R-DDI-4641258">
    <property type="pathway name" value="Degradation of DVL"/>
</dbReference>
<dbReference type="Reactome" id="R-DDI-5632684">
    <property type="pathway name" value="Hedgehog 'on' state"/>
</dbReference>
<dbReference type="Reactome" id="R-DDI-5658442">
    <property type="pathway name" value="Regulation of RAS by GAPs"/>
</dbReference>
<dbReference type="Reactome" id="R-DDI-5687128">
    <property type="pathway name" value="MAPK6/MAPK4 signaling"/>
</dbReference>
<dbReference type="Reactome" id="R-DDI-5689603">
    <property type="pathway name" value="UCH proteinases"/>
</dbReference>
<dbReference type="Reactome" id="R-DDI-5689880">
    <property type="pathway name" value="Ub-specific processing proteases"/>
</dbReference>
<dbReference type="Reactome" id="R-DDI-68949">
    <property type="pathway name" value="Orc1 removal from chromatin"/>
</dbReference>
<dbReference type="Reactome" id="R-DDI-69017">
    <property type="pathway name" value="CDK-mediated phosphorylation and removal of Cdc6"/>
</dbReference>
<dbReference type="Reactome" id="R-DDI-69601">
    <property type="pathway name" value="Ubiquitin Mediated Degradation of Phosphorylated Cdc25A"/>
</dbReference>
<dbReference type="Reactome" id="R-DDI-8854050">
    <property type="pathway name" value="FBXL7 down-regulates AURKA during mitotic entry and in early mitosis"/>
</dbReference>
<dbReference type="Reactome" id="R-DDI-8948751">
    <property type="pathway name" value="Regulation of PTEN stability and activity"/>
</dbReference>
<dbReference type="Reactome" id="R-DDI-8951664">
    <property type="pathway name" value="Neddylation"/>
</dbReference>
<dbReference type="Reactome" id="R-DDI-9755511">
    <property type="pathway name" value="KEAP1-NFE2L2 pathway"/>
</dbReference>
<dbReference type="Reactome" id="R-DDI-983168">
    <property type="pathway name" value="Antigen processing: Ubiquitination &amp; Proteasome degradation"/>
</dbReference>
<dbReference type="Reactome" id="R-DDI-9907900">
    <property type="pathway name" value="Proteasome assembly"/>
</dbReference>
<dbReference type="PRO" id="PR:Q556Q0"/>
<dbReference type="Proteomes" id="UP000002195">
    <property type="component" value="Chromosome 2"/>
</dbReference>
<dbReference type="GO" id="GO:0005737">
    <property type="term" value="C:cytoplasm"/>
    <property type="evidence" value="ECO:0000353"/>
    <property type="project" value="dictyBase"/>
</dbReference>
<dbReference type="GO" id="GO:0005829">
    <property type="term" value="C:cytosol"/>
    <property type="evidence" value="ECO:0000353"/>
    <property type="project" value="dictyBase"/>
</dbReference>
<dbReference type="GO" id="GO:0005634">
    <property type="term" value="C:nucleus"/>
    <property type="evidence" value="ECO:0000353"/>
    <property type="project" value="dictyBase"/>
</dbReference>
<dbReference type="GO" id="GO:0019774">
    <property type="term" value="C:proteasome core complex, beta-subunit complex"/>
    <property type="evidence" value="ECO:0000314"/>
    <property type="project" value="dictyBase"/>
</dbReference>
<dbReference type="GO" id="GO:0010498">
    <property type="term" value="P:proteasomal protein catabolic process"/>
    <property type="evidence" value="ECO:0000314"/>
    <property type="project" value="dictyBase"/>
</dbReference>
<dbReference type="GO" id="GO:0043161">
    <property type="term" value="P:proteasome-mediated ubiquitin-dependent protein catabolic process"/>
    <property type="evidence" value="ECO:0000318"/>
    <property type="project" value="GO_Central"/>
</dbReference>
<dbReference type="CDD" id="cd03760">
    <property type="entry name" value="proteasome_beta_type_4"/>
    <property type="match status" value="1"/>
</dbReference>
<dbReference type="FunFam" id="3.60.20.10:FF:000074">
    <property type="entry name" value="Proteasome subunit beta"/>
    <property type="match status" value="1"/>
</dbReference>
<dbReference type="Gene3D" id="3.60.20.10">
    <property type="entry name" value="Glutamine Phosphoribosylpyrophosphate, subunit 1, domain 1"/>
    <property type="match status" value="1"/>
</dbReference>
<dbReference type="InterPro" id="IPR029055">
    <property type="entry name" value="Ntn_hydrolases_N"/>
</dbReference>
<dbReference type="InterPro" id="IPR016295">
    <property type="entry name" value="Proteasome_beta4"/>
</dbReference>
<dbReference type="InterPro" id="IPR016050">
    <property type="entry name" value="Proteasome_bsu_CS"/>
</dbReference>
<dbReference type="InterPro" id="IPR001353">
    <property type="entry name" value="Proteasome_sua/b"/>
</dbReference>
<dbReference type="InterPro" id="IPR023333">
    <property type="entry name" value="Proteasome_suB-type"/>
</dbReference>
<dbReference type="PANTHER" id="PTHR32194">
    <property type="entry name" value="METALLOPROTEASE TLDD"/>
    <property type="match status" value="1"/>
</dbReference>
<dbReference type="PANTHER" id="PTHR32194:SF6">
    <property type="entry name" value="PROTEASOME SUBUNIT BETA"/>
    <property type="match status" value="1"/>
</dbReference>
<dbReference type="Pfam" id="PF00227">
    <property type="entry name" value="Proteasome"/>
    <property type="match status" value="1"/>
</dbReference>
<dbReference type="PIRSF" id="PIRSF001213">
    <property type="entry name" value="Psome_endopept_beta"/>
    <property type="match status" value="1"/>
</dbReference>
<dbReference type="SUPFAM" id="SSF56235">
    <property type="entry name" value="N-terminal nucleophile aminohydrolases (Ntn hydrolases)"/>
    <property type="match status" value="1"/>
</dbReference>
<dbReference type="PROSITE" id="PS00854">
    <property type="entry name" value="PROTEASOME_BETA_1"/>
    <property type="match status" value="1"/>
</dbReference>
<dbReference type="PROSITE" id="PS51476">
    <property type="entry name" value="PROTEASOME_BETA_2"/>
    <property type="match status" value="1"/>
</dbReference>
<keyword id="KW-0963">Cytoplasm</keyword>
<keyword id="KW-0539">Nucleus</keyword>
<keyword id="KW-0647">Proteasome</keyword>
<keyword id="KW-1185">Reference proteome</keyword>
<feature type="chain" id="PRO_0000328482" description="Proteasome subunit beta type-4">
    <location>
        <begin position="1"/>
        <end position="259"/>
    </location>
</feature>
<sequence length="259" mass="29006">MSHEHVNFPVYGQVDYFKQQQPQQPQYNPHLGGKQKTLDPIVTGTSVIAIKYDKGVVMGSDMLLSYGSLARFNSTERMKKFGGYTIVGASGEYSDFQSITNTLNDLVTDDHCMDDGSKLSSEEIWNYLARVLYNQRNRGNPLWNTLVVMGYQGGKSFLGKVDLVGTCYKDDIITTGYGSHIALPLLRKARDENPNMNLEQAKQLIQDCLRVLFYRDARSSKKIQISVAGEEGIEISGPIELDTFHWNSGEAAVKNFSQV</sequence>
<evidence type="ECO:0000250" key="1"/>
<evidence type="ECO:0000255" key="2">
    <source>
        <dbReference type="PROSITE-ProRule" id="PRU00809"/>
    </source>
</evidence>
<evidence type="ECO:0000305" key="3"/>
<accession>Q556Q0</accession>
<accession>Q86JY1</accession>
<comment type="function">
    <text evidence="1">Non-catalytic component of the proteasome, a multicatalytic proteinase complex which is characterized by its ability to cleave peptides with Arg, Phe, Tyr, Leu, and Glu adjacent to the leaving group at neutral or slightly basic pH. The proteasome has an ATP-dependent proteolytic activity (By similarity).</text>
</comment>
<comment type="subunit">
    <text evidence="1">The 26S proteasome consists of a 20S proteasome core and two 19S regulatory subunits. The 20S proteasome core is composed of 28 subunits that are arranged in four stacked rings, resulting in a barrel-shaped structure. The two end rings are each formed by seven alpha subunits, and the two central rings are each formed by seven beta subunits. The catalytic chamber with the active sites is on the inside of the barrel (By similarity).</text>
</comment>
<comment type="subcellular location">
    <subcellularLocation>
        <location evidence="2">Cytoplasm</location>
    </subcellularLocation>
    <subcellularLocation>
        <location evidence="1">Nucleus</location>
    </subcellularLocation>
</comment>
<comment type="similarity">
    <text evidence="2">Belongs to the peptidase T1B family.</text>
</comment>
<comment type="caution">
    <text evidence="3">The gene for this protein is duplicated in strains AX3 and AX4. These strains contain a duplication of a segment of 750 kb of chromosome 2 compared to the corresponding sequence in strain AX2.</text>
</comment>
<proteinExistence type="inferred from homology"/>
<reference key="1">
    <citation type="journal article" date="2002" name="Nature">
        <title>Sequence and analysis of chromosome 2 of Dictyostelium discoideum.</title>
        <authorList>
            <person name="Gloeckner G."/>
            <person name="Eichinger L."/>
            <person name="Szafranski K."/>
            <person name="Pachebat J.A."/>
            <person name="Bankier A.T."/>
            <person name="Dear P.H."/>
            <person name="Lehmann R."/>
            <person name="Baumgart C."/>
            <person name="Parra G."/>
            <person name="Abril J.F."/>
            <person name="Guigo R."/>
            <person name="Kumpf K."/>
            <person name="Tunggal B."/>
            <person name="Cox E.C."/>
            <person name="Quail M.A."/>
            <person name="Platzer M."/>
            <person name="Rosenthal A."/>
            <person name="Noegel A.A."/>
        </authorList>
    </citation>
    <scope>NUCLEOTIDE SEQUENCE [LARGE SCALE GENOMIC DNA]</scope>
    <source>
        <strain>AX4</strain>
    </source>
</reference>
<reference key="2">
    <citation type="journal article" date="2005" name="Nature">
        <title>The genome of the social amoeba Dictyostelium discoideum.</title>
        <authorList>
            <person name="Eichinger L."/>
            <person name="Pachebat J.A."/>
            <person name="Gloeckner G."/>
            <person name="Rajandream M.A."/>
            <person name="Sucgang R."/>
            <person name="Berriman M."/>
            <person name="Song J."/>
            <person name="Olsen R."/>
            <person name="Szafranski K."/>
            <person name="Xu Q."/>
            <person name="Tunggal B."/>
            <person name="Kummerfeld S."/>
            <person name="Madera M."/>
            <person name="Konfortov B.A."/>
            <person name="Rivero F."/>
            <person name="Bankier A.T."/>
            <person name="Lehmann R."/>
            <person name="Hamlin N."/>
            <person name="Davies R."/>
            <person name="Gaudet P."/>
            <person name="Fey P."/>
            <person name="Pilcher K."/>
            <person name="Chen G."/>
            <person name="Saunders D."/>
            <person name="Sodergren E.J."/>
            <person name="Davis P."/>
            <person name="Kerhornou A."/>
            <person name="Nie X."/>
            <person name="Hall N."/>
            <person name="Anjard C."/>
            <person name="Hemphill L."/>
            <person name="Bason N."/>
            <person name="Farbrother P."/>
            <person name="Desany B."/>
            <person name="Just E."/>
            <person name="Morio T."/>
            <person name="Rost R."/>
            <person name="Churcher C.M."/>
            <person name="Cooper J."/>
            <person name="Haydock S."/>
            <person name="van Driessche N."/>
            <person name="Cronin A."/>
            <person name="Goodhead I."/>
            <person name="Muzny D.M."/>
            <person name="Mourier T."/>
            <person name="Pain A."/>
            <person name="Lu M."/>
            <person name="Harper D."/>
            <person name="Lindsay R."/>
            <person name="Hauser H."/>
            <person name="James K.D."/>
            <person name="Quiles M."/>
            <person name="Madan Babu M."/>
            <person name="Saito T."/>
            <person name="Buchrieser C."/>
            <person name="Wardroper A."/>
            <person name="Felder M."/>
            <person name="Thangavelu M."/>
            <person name="Johnson D."/>
            <person name="Knights A."/>
            <person name="Loulseged H."/>
            <person name="Mungall K.L."/>
            <person name="Oliver K."/>
            <person name="Price C."/>
            <person name="Quail M.A."/>
            <person name="Urushihara H."/>
            <person name="Hernandez J."/>
            <person name="Rabbinowitsch E."/>
            <person name="Steffen D."/>
            <person name="Sanders M."/>
            <person name="Ma J."/>
            <person name="Kohara Y."/>
            <person name="Sharp S."/>
            <person name="Simmonds M.N."/>
            <person name="Spiegler S."/>
            <person name="Tivey A."/>
            <person name="Sugano S."/>
            <person name="White B."/>
            <person name="Walker D."/>
            <person name="Woodward J.R."/>
            <person name="Winckler T."/>
            <person name="Tanaka Y."/>
            <person name="Shaulsky G."/>
            <person name="Schleicher M."/>
            <person name="Weinstock G.M."/>
            <person name="Rosenthal A."/>
            <person name="Cox E.C."/>
            <person name="Chisholm R.L."/>
            <person name="Gibbs R.A."/>
            <person name="Loomis W.F."/>
            <person name="Platzer M."/>
            <person name="Kay R.R."/>
            <person name="Williams J.G."/>
            <person name="Dear P.H."/>
            <person name="Noegel A.A."/>
            <person name="Barrell B.G."/>
            <person name="Kuspa A."/>
        </authorList>
    </citation>
    <scope>NUCLEOTIDE SEQUENCE [LARGE SCALE GENOMIC DNA]</scope>
    <source>
        <strain>AX4</strain>
    </source>
</reference>
<protein>
    <recommendedName>
        <fullName>Proteasome subunit beta type-4</fullName>
    </recommendedName>
</protein>
<name>PSB4_DICDI</name>
<gene>
    <name type="primary">psmB4-1</name>
    <name type="ORF">DDB_G0273163</name>
</gene>
<gene>
    <name type="primary">psmB4-2</name>
    <name type="ORF">DDB_G0273909</name>
</gene>